<gene>
    <name type="primary">HTA1</name>
    <name type="ordered locus">KLLA0E17413g</name>
</gene>
<gene>
    <name type="primary">HTA2</name>
    <name type="ordered locus">KLLA0F13332g</name>
</gene>
<protein>
    <recommendedName>
        <fullName>Histone H2A</fullName>
    </recommendedName>
</protein>
<dbReference type="EMBL" id="CR382125">
    <property type="protein sequence ID" value="CAG99819.1"/>
    <property type="molecule type" value="Genomic_DNA"/>
</dbReference>
<dbReference type="EMBL" id="CR382126">
    <property type="protein sequence ID" value="CAG98388.1"/>
    <property type="molecule type" value="Genomic_DNA"/>
</dbReference>
<dbReference type="RefSeq" id="XP_454732.1">
    <property type="nucleotide sequence ID" value="XM_454732.1"/>
</dbReference>
<dbReference type="RefSeq" id="XP_455680.1">
    <property type="nucleotide sequence ID" value="XM_455680.1"/>
</dbReference>
<dbReference type="PDB" id="6UPH">
    <property type="method" value="EM"/>
    <property type="resolution" value="2.70 A"/>
    <property type="chains" value="C/G=1-130"/>
</dbReference>
<dbReference type="PDBsum" id="6UPH"/>
<dbReference type="EMDB" id="EMD-20839"/>
<dbReference type="SMR" id="Q6CK59"/>
<dbReference type="FunCoup" id="Q6CK59">
    <property type="interactions" value="1295"/>
</dbReference>
<dbReference type="STRING" id="284590.Q6CK59"/>
<dbReference type="PaxDb" id="284590-Q6CK59"/>
<dbReference type="KEGG" id="kla:KLLA0_E17359g"/>
<dbReference type="KEGG" id="kla:KLLA0_F13332g"/>
<dbReference type="eggNOG" id="KOG1756">
    <property type="taxonomic scope" value="Eukaryota"/>
</dbReference>
<dbReference type="HOGENOM" id="CLU_062828_3_1_1"/>
<dbReference type="InParanoid" id="Q6CK59"/>
<dbReference type="OMA" id="HKKTRIN"/>
<dbReference type="Proteomes" id="UP000000598">
    <property type="component" value="Chromosome E"/>
</dbReference>
<dbReference type="Proteomes" id="UP000000598">
    <property type="component" value="Chromosome F"/>
</dbReference>
<dbReference type="GO" id="GO:0043505">
    <property type="term" value="C:CENP-A containing nucleosome"/>
    <property type="evidence" value="ECO:0000314"/>
    <property type="project" value="UniProtKB"/>
</dbReference>
<dbReference type="GO" id="GO:0005634">
    <property type="term" value="C:nucleus"/>
    <property type="evidence" value="ECO:0007669"/>
    <property type="project" value="UniProtKB-SubCell"/>
</dbReference>
<dbReference type="GO" id="GO:0003677">
    <property type="term" value="F:DNA binding"/>
    <property type="evidence" value="ECO:0007669"/>
    <property type="project" value="UniProtKB-KW"/>
</dbReference>
<dbReference type="GO" id="GO:0046982">
    <property type="term" value="F:protein heterodimerization activity"/>
    <property type="evidence" value="ECO:0007669"/>
    <property type="project" value="InterPro"/>
</dbReference>
<dbReference type="GO" id="GO:0030527">
    <property type="term" value="F:structural constituent of chromatin"/>
    <property type="evidence" value="ECO:0007669"/>
    <property type="project" value="InterPro"/>
</dbReference>
<dbReference type="GO" id="GO:0006281">
    <property type="term" value="P:DNA repair"/>
    <property type="evidence" value="ECO:0007669"/>
    <property type="project" value="UniProtKB-KW"/>
</dbReference>
<dbReference type="CDD" id="cd00074">
    <property type="entry name" value="HFD_H2A"/>
    <property type="match status" value="1"/>
</dbReference>
<dbReference type="FunFam" id="1.10.20.10:FF:000008">
    <property type="entry name" value="Histone H2A"/>
    <property type="match status" value="1"/>
</dbReference>
<dbReference type="Gene3D" id="1.10.20.10">
    <property type="entry name" value="Histone, subunit A"/>
    <property type="match status" value="1"/>
</dbReference>
<dbReference type="InterPro" id="IPR009072">
    <property type="entry name" value="Histone-fold"/>
</dbReference>
<dbReference type="InterPro" id="IPR002119">
    <property type="entry name" value="Histone_H2A"/>
</dbReference>
<dbReference type="InterPro" id="IPR007125">
    <property type="entry name" value="Histone_H2A/H2B/H3"/>
</dbReference>
<dbReference type="InterPro" id="IPR032454">
    <property type="entry name" value="Histone_H2A_C"/>
</dbReference>
<dbReference type="InterPro" id="IPR032458">
    <property type="entry name" value="Histone_H2A_CS"/>
</dbReference>
<dbReference type="PANTHER" id="PTHR23430">
    <property type="entry name" value="HISTONE H2A"/>
    <property type="match status" value="1"/>
</dbReference>
<dbReference type="Pfam" id="PF00125">
    <property type="entry name" value="Histone"/>
    <property type="match status" value="1"/>
</dbReference>
<dbReference type="Pfam" id="PF16211">
    <property type="entry name" value="Histone_H2A_C"/>
    <property type="match status" value="1"/>
</dbReference>
<dbReference type="PRINTS" id="PR00620">
    <property type="entry name" value="HISTONEH2A"/>
</dbReference>
<dbReference type="SMART" id="SM00414">
    <property type="entry name" value="H2A"/>
    <property type="match status" value="1"/>
</dbReference>
<dbReference type="SUPFAM" id="SSF47113">
    <property type="entry name" value="Histone-fold"/>
    <property type="match status" value="1"/>
</dbReference>
<dbReference type="PROSITE" id="PS00046">
    <property type="entry name" value="HISTONE_H2A"/>
    <property type="match status" value="1"/>
</dbReference>
<reference key="1">
    <citation type="journal article" date="2004" name="Nature">
        <title>Genome evolution in yeasts.</title>
        <authorList>
            <person name="Dujon B."/>
            <person name="Sherman D."/>
            <person name="Fischer G."/>
            <person name="Durrens P."/>
            <person name="Casaregola S."/>
            <person name="Lafontaine I."/>
            <person name="de Montigny J."/>
            <person name="Marck C."/>
            <person name="Neuveglise C."/>
            <person name="Talla E."/>
            <person name="Goffard N."/>
            <person name="Frangeul L."/>
            <person name="Aigle M."/>
            <person name="Anthouard V."/>
            <person name="Babour A."/>
            <person name="Barbe V."/>
            <person name="Barnay S."/>
            <person name="Blanchin S."/>
            <person name="Beckerich J.-M."/>
            <person name="Beyne E."/>
            <person name="Bleykasten C."/>
            <person name="Boisrame A."/>
            <person name="Boyer J."/>
            <person name="Cattolico L."/>
            <person name="Confanioleri F."/>
            <person name="de Daruvar A."/>
            <person name="Despons L."/>
            <person name="Fabre E."/>
            <person name="Fairhead C."/>
            <person name="Ferry-Dumazet H."/>
            <person name="Groppi A."/>
            <person name="Hantraye F."/>
            <person name="Hennequin C."/>
            <person name="Jauniaux N."/>
            <person name="Joyet P."/>
            <person name="Kachouri R."/>
            <person name="Kerrest A."/>
            <person name="Koszul R."/>
            <person name="Lemaire M."/>
            <person name="Lesur I."/>
            <person name="Ma L."/>
            <person name="Muller H."/>
            <person name="Nicaud J.-M."/>
            <person name="Nikolski M."/>
            <person name="Oztas S."/>
            <person name="Ozier-Kalogeropoulos O."/>
            <person name="Pellenz S."/>
            <person name="Potier S."/>
            <person name="Richard G.-F."/>
            <person name="Straub M.-L."/>
            <person name="Suleau A."/>
            <person name="Swennen D."/>
            <person name="Tekaia F."/>
            <person name="Wesolowski-Louvel M."/>
            <person name="Westhof E."/>
            <person name="Wirth B."/>
            <person name="Zeniou-Meyer M."/>
            <person name="Zivanovic Y."/>
            <person name="Bolotin-Fukuhara M."/>
            <person name="Thierry A."/>
            <person name="Bouchier C."/>
            <person name="Caudron B."/>
            <person name="Scarpelli C."/>
            <person name="Gaillardin C."/>
            <person name="Weissenbach J."/>
            <person name="Wincker P."/>
            <person name="Souciet J.-L."/>
        </authorList>
    </citation>
    <scope>NUCLEOTIDE SEQUENCE [LARGE SCALE GENOMIC DNA]</scope>
    <source>
        <strain>ATCC 8585 / CBS 2359 / DSM 70799 / NBRC 1267 / NRRL Y-1140 / WM37</strain>
    </source>
</reference>
<reference evidence="5" key="2">
    <citation type="journal article" date="2020" name="Structure">
        <title>Cryoelectron Microscopy Structure of a Yeast Centromeric Nucleosome at 2.7A Resolution.</title>
        <authorList>
            <person name="Migl D."/>
            <person name="Kschonsak M."/>
            <person name="Arthur C.P."/>
            <person name="Khin Y."/>
            <person name="Harrison S.C."/>
            <person name="Ciferri C."/>
            <person name="Dimitrova Y.N."/>
        </authorList>
    </citation>
    <scope>STRUCTURE BY ELECTRON MICROSCOPY (2.70 ANGSTROMS)</scope>
    <scope>IDENTIFICATION IN NUCLEOSOMES</scope>
    <scope>SUBCELLULAR LOCATION</scope>
</reference>
<organism>
    <name type="scientific">Kluyveromyces lactis (strain ATCC 8585 / CBS 2359 / DSM 70799 / NBRC 1267 / NRRL Y-1140 / WM37)</name>
    <name type="common">Yeast</name>
    <name type="synonym">Candida sphaerica</name>
    <dbReference type="NCBI Taxonomy" id="284590"/>
    <lineage>
        <taxon>Eukaryota</taxon>
        <taxon>Fungi</taxon>
        <taxon>Dikarya</taxon>
        <taxon>Ascomycota</taxon>
        <taxon>Saccharomycotina</taxon>
        <taxon>Saccharomycetes</taxon>
        <taxon>Saccharomycetales</taxon>
        <taxon>Saccharomycetaceae</taxon>
        <taxon>Kluyveromyces</taxon>
    </lineage>
</organism>
<sequence length="130" mass="13819">MSGKGGKAGSAAKASQSRSAKAGLTFPVGRVHRLLRKGNYAQRIGSGAPVYLTAVLEYLAAEILELAGNAARDNKKTRIIPRHLQLAIRNDDELNKLLGNVTIAQGGVLPNIHQNLLPKKSSKAKASQEL</sequence>
<keyword id="KW-0002">3D-structure</keyword>
<keyword id="KW-0007">Acetylation</keyword>
<keyword id="KW-0158">Chromosome</keyword>
<keyword id="KW-0227">DNA damage</keyword>
<keyword id="KW-0234">DNA repair</keyword>
<keyword id="KW-0238">DNA-binding</keyword>
<keyword id="KW-0488">Methylation</keyword>
<keyword id="KW-0544">Nucleosome core</keyword>
<keyword id="KW-0539">Nucleus</keyword>
<keyword id="KW-0597">Phosphoprotein</keyword>
<keyword id="KW-1185">Reference proteome</keyword>
<name>H2A_KLULA</name>
<comment type="function">
    <text evidence="2">Core component of nucleosome which plays a central role in DNA double strand break (DSB) repair. Nucleosomes wrap and compact DNA into chromatin, limiting DNA accessibility to the cellular machineries which require DNA as a template. Histones thereby play a central role in transcription regulation, DNA repair, DNA replication and chromosomal stability. DNA accessibility is regulated via a complex set of post-translational modifications of histones, also called histone code, and nucleosome remodeling.</text>
</comment>
<comment type="subunit">
    <text evidence="4">The nucleosome is a histone octamer containing two molecules each of H2A, H2B, H3 and H4 assembled in one H3-H4 heterotetramer and two H2A-H2B heterodimers. The octamer wraps approximately 147 bp of DNA.</text>
</comment>
<comment type="subcellular location">
    <subcellularLocation>
        <location evidence="4">Nucleus</location>
    </subcellularLocation>
    <subcellularLocation>
        <location evidence="4">Chromosome</location>
    </subcellularLocation>
</comment>
<comment type="domain">
    <text>The [ST]-Q motif constitutes a recognition sequence for kinases from the PI3/PI4-kinase family.</text>
</comment>
<comment type="PTM">
    <text evidence="2">Phosphorylated to form H2AS128ph (gamma-H2A) in response to DNA double-strand breaks (DSBs) generated by exogenous genotoxic agents and by stalled replication forks. Phosphorylation is dependent on the DNA damage checkpoint kinases MEC1/ATR and TEL1/ATM, spreads on either side of a detected DSB site and may mark the surrounding chromatin for recruitment of proteins required for DNA damage signaling and repair. Gamma-H2A is removed from the DNA prior to the strand invasion-primer extension step of the repair process and subsequently dephosphorylated by PPH3, a component of the histone H2A phosphatase complex (HTP-C). Dephosphorylation is necessary for efficient recovery from the DNA damage checkpoint (By similarity).</text>
</comment>
<comment type="PTM">
    <text evidence="2">Acetylated by ESA1 to form H2AK4ac and H2AK7ac.</text>
</comment>
<comment type="miscellaneous">
    <text evidence="3">In contrast to vertebrates and insects, its C-terminus is not monoubiquitinated.</text>
</comment>
<comment type="miscellaneous">
    <text>There are 2 genes for histone H2A in K.lactis.</text>
</comment>
<comment type="similarity">
    <text evidence="3">Belongs to the histone H2A family.</text>
</comment>
<comment type="caution">
    <text evidence="3">To ensure consistency between histone entries, we follow the 'Brno' nomenclature for histone modifications, with positions referring to those used in the literature for the 'closest' model organism. Due to slight variations in histone sequences between organisms and to the presence of initiator methionine in UniProtKB/Swiss-Prot sequences, the actual positions of modified amino acids in the sequence generally differ. In this entry the following conventions are used: H2AK4ac = acetylated Lys-4; H2AK7ac = acetylated Lys-7; H2AS128ph = phosphorylated Ser-127.</text>
</comment>
<proteinExistence type="evidence at protein level"/>
<evidence type="ECO:0000250" key="1"/>
<evidence type="ECO:0000250" key="2">
    <source>
        <dbReference type="UniProtKB" id="P04911"/>
    </source>
</evidence>
<evidence type="ECO:0000305" key="3"/>
<evidence type="ECO:0000305" key="4">
    <source>
    </source>
</evidence>
<evidence type="ECO:0007744" key="5">
    <source>
        <dbReference type="PDB" id="6UPH"/>
    </source>
</evidence>
<evidence type="ECO:0007829" key="6">
    <source>
        <dbReference type="PDB" id="6UPH"/>
    </source>
</evidence>
<accession>Q6CK59</accession>
<feature type="initiator methionine" description="Removed" evidence="1">
    <location>
        <position position="1"/>
    </location>
</feature>
<feature type="chain" id="PRO_0000228731" description="Histone H2A">
    <location>
        <begin position="2"/>
        <end position="130"/>
    </location>
</feature>
<feature type="short sequence motif" description="[ST]-Q motif">
    <location>
        <begin position="127"/>
        <end position="128"/>
    </location>
</feature>
<feature type="site" description="Not ubiquitinated" evidence="3">
    <location>
        <position position="119"/>
    </location>
</feature>
<feature type="modified residue" description="N6-acetyllysine" evidence="2">
    <location>
        <position position="4"/>
    </location>
</feature>
<feature type="modified residue" description="N6-acetyllysine" evidence="2">
    <location>
        <position position="7"/>
    </location>
</feature>
<feature type="modified residue" description="N5-methylglutamine" evidence="2">
    <location>
        <position position="105"/>
    </location>
</feature>
<feature type="modified residue" description="Phosphoserine" evidence="2">
    <location>
        <position position="127"/>
    </location>
</feature>
<feature type="helix" evidence="6">
    <location>
        <begin position="18"/>
        <end position="22"/>
    </location>
</feature>
<feature type="helix" evidence="6">
    <location>
        <begin position="28"/>
        <end position="36"/>
    </location>
</feature>
<feature type="strand" evidence="6">
    <location>
        <begin position="37"/>
        <end position="40"/>
    </location>
</feature>
<feature type="strand" evidence="6">
    <location>
        <begin position="42"/>
        <end position="44"/>
    </location>
</feature>
<feature type="helix" evidence="6">
    <location>
        <begin position="48"/>
        <end position="73"/>
    </location>
</feature>
<feature type="strand" evidence="6">
    <location>
        <begin position="77"/>
        <end position="79"/>
    </location>
</feature>
<feature type="helix" evidence="6">
    <location>
        <begin position="81"/>
        <end position="89"/>
    </location>
</feature>
<feature type="helix" evidence="6">
    <location>
        <begin position="92"/>
        <end position="97"/>
    </location>
</feature>
<feature type="turn" evidence="6">
    <location>
        <begin position="98"/>
        <end position="100"/>
    </location>
</feature>
<feature type="strand" evidence="6">
    <location>
        <begin position="101"/>
        <end position="103"/>
    </location>
</feature>